<accession>B5F9W3</accession>
<reference key="1">
    <citation type="submission" date="2008-08" db="EMBL/GenBank/DDBJ databases">
        <title>Complete sequence of Vibrio fischeri strain MJ11.</title>
        <authorList>
            <person name="Mandel M.J."/>
            <person name="Stabb E.V."/>
            <person name="Ruby E.G."/>
            <person name="Ferriera S."/>
            <person name="Johnson J."/>
            <person name="Kravitz S."/>
            <person name="Beeson K."/>
            <person name="Sutton G."/>
            <person name="Rogers Y.-H."/>
            <person name="Friedman R."/>
            <person name="Frazier M."/>
            <person name="Venter J.C."/>
        </authorList>
    </citation>
    <scope>NUCLEOTIDE SEQUENCE [LARGE SCALE GENOMIC DNA]</scope>
    <source>
        <strain>MJ11</strain>
    </source>
</reference>
<evidence type="ECO:0000255" key="1">
    <source>
        <dbReference type="HAMAP-Rule" id="MF_00392"/>
    </source>
</evidence>
<name>LPXB_ALIFM</name>
<gene>
    <name evidence="1" type="primary">lpxB</name>
    <name type="ordered locus">VFMJ11_2083</name>
</gene>
<keyword id="KW-0328">Glycosyltransferase</keyword>
<keyword id="KW-0441">Lipid A biosynthesis</keyword>
<keyword id="KW-0444">Lipid biosynthesis</keyword>
<keyword id="KW-0443">Lipid metabolism</keyword>
<keyword id="KW-0808">Transferase</keyword>
<sequence>MTKPLRIGIVAGELSGDTLGEGFIKSIKAQYPDAEFVGIGGPKMIAQGCDSLFDMEELAVMGLVEVLGRLPRLLKVKAELVRYFTQNPPDVFIGIDAPDFNLRLEKTLKDNGIKTVHYVSPSVWAWRPKRIFKIDAATDLVLAFLPFEKAFYDKYNVACEFIGHTLADAIPMETDKFAARELLGLEQDRKWLAVLPGSRGGEVALIAKPFIETCQRIHKQHPDMGFVVAAVNEKRREQFETIWKETAPELDFVIIQDTARNVMTAADAVLLASGTVALECMLVKRPMVVGYQVNKLTGWIAQKLSITEFVSLPNVLAGKELVQEFIQEECHPDFLYPAMEKVLDNDNSELIEKFTEMHQWIRKDADKQAANAVLRLINKETAE</sequence>
<comment type="function">
    <text evidence="1">Condensation of UDP-2,3-diacylglucosamine and 2,3-diacylglucosamine-1-phosphate to form lipid A disaccharide, a precursor of lipid A, a phosphorylated glycolipid that anchors the lipopolysaccharide to the outer membrane of the cell.</text>
</comment>
<comment type="catalytic activity">
    <reaction evidence="1">
        <text>a lipid X + a UDP-2-N,3-O-bis[(3R)-3-hydroxyacyl]-alpha-D-glucosamine = a lipid A disaccharide + UDP + H(+)</text>
        <dbReference type="Rhea" id="RHEA:67828"/>
        <dbReference type="ChEBI" id="CHEBI:15378"/>
        <dbReference type="ChEBI" id="CHEBI:58223"/>
        <dbReference type="ChEBI" id="CHEBI:137748"/>
        <dbReference type="ChEBI" id="CHEBI:176338"/>
        <dbReference type="ChEBI" id="CHEBI:176343"/>
        <dbReference type="EC" id="2.4.1.182"/>
    </reaction>
</comment>
<comment type="pathway">
    <text evidence="1">Bacterial outer membrane biogenesis; LPS lipid A biosynthesis.</text>
</comment>
<comment type="similarity">
    <text evidence="1">Belongs to the LpxB family.</text>
</comment>
<dbReference type="EC" id="2.4.1.182" evidence="1"/>
<dbReference type="EMBL" id="CP001139">
    <property type="protein sequence ID" value="ACH66387.1"/>
    <property type="molecule type" value="Genomic_DNA"/>
</dbReference>
<dbReference type="RefSeq" id="WP_012533690.1">
    <property type="nucleotide sequence ID" value="NC_011184.1"/>
</dbReference>
<dbReference type="SMR" id="B5F9W3"/>
<dbReference type="CAZy" id="GT19">
    <property type="family name" value="Glycosyltransferase Family 19"/>
</dbReference>
<dbReference type="KEGG" id="vfm:VFMJ11_2083"/>
<dbReference type="HOGENOM" id="CLU_036577_3_0_6"/>
<dbReference type="UniPathway" id="UPA00973"/>
<dbReference type="Proteomes" id="UP000001857">
    <property type="component" value="Chromosome I"/>
</dbReference>
<dbReference type="GO" id="GO:0016020">
    <property type="term" value="C:membrane"/>
    <property type="evidence" value="ECO:0007669"/>
    <property type="project" value="GOC"/>
</dbReference>
<dbReference type="GO" id="GO:0008915">
    <property type="term" value="F:lipid-A-disaccharide synthase activity"/>
    <property type="evidence" value="ECO:0007669"/>
    <property type="project" value="UniProtKB-UniRule"/>
</dbReference>
<dbReference type="GO" id="GO:0005543">
    <property type="term" value="F:phospholipid binding"/>
    <property type="evidence" value="ECO:0007669"/>
    <property type="project" value="TreeGrafter"/>
</dbReference>
<dbReference type="GO" id="GO:0009245">
    <property type="term" value="P:lipid A biosynthetic process"/>
    <property type="evidence" value="ECO:0007669"/>
    <property type="project" value="UniProtKB-UniRule"/>
</dbReference>
<dbReference type="HAMAP" id="MF_00392">
    <property type="entry name" value="LpxB"/>
    <property type="match status" value="1"/>
</dbReference>
<dbReference type="InterPro" id="IPR003835">
    <property type="entry name" value="Glyco_trans_19"/>
</dbReference>
<dbReference type="NCBIfam" id="TIGR00215">
    <property type="entry name" value="lpxB"/>
    <property type="match status" value="1"/>
</dbReference>
<dbReference type="PANTHER" id="PTHR30372">
    <property type="entry name" value="LIPID-A-DISACCHARIDE SYNTHASE"/>
    <property type="match status" value="1"/>
</dbReference>
<dbReference type="PANTHER" id="PTHR30372:SF4">
    <property type="entry name" value="LIPID-A-DISACCHARIDE SYNTHASE, MITOCHONDRIAL-RELATED"/>
    <property type="match status" value="1"/>
</dbReference>
<dbReference type="Pfam" id="PF02684">
    <property type="entry name" value="LpxB"/>
    <property type="match status" value="1"/>
</dbReference>
<dbReference type="SUPFAM" id="SSF53756">
    <property type="entry name" value="UDP-Glycosyltransferase/glycogen phosphorylase"/>
    <property type="match status" value="1"/>
</dbReference>
<organism>
    <name type="scientific">Aliivibrio fischeri (strain MJ11)</name>
    <name type="common">Vibrio fischeri</name>
    <dbReference type="NCBI Taxonomy" id="388396"/>
    <lineage>
        <taxon>Bacteria</taxon>
        <taxon>Pseudomonadati</taxon>
        <taxon>Pseudomonadota</taxon>
        <taxon>Gammaproteobacteria</taxon>
        <taxon>Vibrionales</taxon>
        <taxon>Vibrionaceae</taxon>
        <taxon>Aliivibrio</taxon>
    </lineage>
</organism>
<proteinExistence type="inferred from homology"/>
<feature type="chain" id="PRO_1000123068" description="Lipid-A-disaccharide synthase">
    <location>
        <begin position="1"/>
        <end position="383"/>
    </location>
</feature>
<protein>
    <recommendedName>
        <fullName evidence="1">Lipid-A-disaccharide synthase</fullName>
        <ecNumber evidence="1">2.4.1.182</ecNumber>
    </recommendedName>
</protein>